<reference key="1">
    <citation type="journal article" date="1993" name="J. Gen. Virol.">
        <title>Cloning and sequence analysis of the phosphoprotein gene of rinderpest virus.</title>
        <authorList>
            <person name="Baron M.D."/>
            <person name="Shaila M.S."/>
            <person name="Barrett T."/>
        </authorList>
    </citation>
    <scope>NUCLEOTIDE SEQUENCE [GENOMIC RNA]</scope>
    <scope>RNA EDITING</scope>
</reference>
<keyword id="KW-1035">Host cytoplasm</keyword>
<keyword id="KW-0945">Host-virus interaction</keyword>
<keyword id="KW-1090">Inhibition of host innate immune response by virus</keyword>
<keyword id="KW-1114">Inhibition of host interferon signaling pathway by virus</keyword>
<keyword id="KW-1089">Inhibition of host MDA5 by virus</keyword>
<keyword id="KW-1113">Inhibition of host RLR pathway by virus</keyword>
<keyword id="KW-1112">Inhibition of host TYK2 by virus</keyword>
<keyword id="KW-0922">Interferon antiviral system evasion</keyword>
<keyword id="KW-0479">Metal-binding</keyword>
<keyword id="KW-0691">RNA editing</keyword>
<keyword id="KW-0899">Viral immunoevasion</keyword>
<keyword id="KW-0862">Zinc</keyword>
<comment type="function">
    <text evidence="1">Plays an essential role in the inhibition of host immune response. Prevents the establishment of cellular antiviral state by blocking interferon-alpha/beta (IFN-alpha/beta) production and signaling pathway. Interacts with host IFIH1/MDA5 and DHX58/LGP2 to inhibit the transduction pathway involved in the activation of IFN-beta promoter, thus protecting the virus against cell antiviral state. Blocks the type I interferon signaling pathway by interacting with host TYK2 and thereby inhibiting downstream STAT1 and STAT2 phosphorylation (By similarity).</text>
</comment>
<comment type="subunit">
    <text evidence="1">Interacts with host IFIH1/MDA5 and DHX58/LGP2. Interacts with host TYK2; this interaction inhibits the type I interferon signaling pathway (By similarity).</text>
</comment>
<comment type="subcellular location">
    <subcellularLocation>
        <location evidence="1">Host cytoplasm</location>
    </subcellularLocation>
</comment>
<comment type="RNA editing">
    <location>
        <position position="231" evidence="3"/>
    </location>
    <text>Partially edited. RNA editing at this position consists of an insertion of one guanine nucleotide. The sequence displayed here is the V protein, derived from the edited RNA. The unedited RNA gives rise to the P protein (AC Q03335).</text>
</comment>
<comment type="miscellaneous">
    <text>Highly virulent strain of Rinderpest virus can blocks the phosphorylation of host JAK1 kinase, thereby blocking the type II interferon signaling as well.</text>
</comment>
<comment type="similarity">
    <text evidence="4">Belongs to the paramyxoviruses V protein family.</text>
</comment>
<evidence type="ECO:0000250" key="1"/>
<evidence type="ECO:0000256" key="2">
    <source>
        <dbReference type="SAM" id="MobiDB-lite"/>
    </source>
</evidence>
<evidence type="ECO:0000269" key="3">
    <source>
    </source>
</evidence>
<evidence type="ECO:0000305" key="4"/>
<dbReference type="EMBL" id="X68311">
    <property type="protein sequence ID" value="CAA48390.2"/>
    <property type="molecule type" value="Genomic_RNA"/>
</dbReference>
<dbReference type="PIR" id="JQ1930">
    <property type="entry name" value="JQ1930"/>
</dbReference>
<dbReference type="SMR" id="Q03340"/>
<dbReference type="IntAct" id="Q03340">
    <property type="interactions" value="4"/>
</dbReference>
<dbReference type="GO" id="GO:0030430">
    <property type="term" value="C:host cell cytoplasm"/>
    <property type="evidence" value="ECO:0007669"/>
    <property type="project" value="UniProtKB-SubCell"/>
</dbReference>
<dbReference type="GO" id="GO:0046872">
    <property type="term" value="F:metal ion binding"/>
    <property type="evidence" value="ECO:0007669"/>
    <property type="project" value="UniProtKB-KW"/>
</dbReference>
<dbReference type="GO" id="GO:0039554">
    <property type="term" value="P:symbiont-mediated suppression of host cytoplasmic pattern recognition receptor signaling pathway via inhibition of MDA-5 activity"/>
    <property type="evidence" value="ECO:0007669"/>
    <property type="project" value="UniProtKB-KW"/>
</dbReference>
<dbReference type="GO" id="GO:0039574">
    <property type="term" value="P:symbiont-mediated suppression of host JAK-STAT cascade via inhibition of host TYK2 activity"/>
    <property type="evidence" value="ECO:0007669"/>
    <property type="project" value="UniProtKB-KW"/>
</dbReference>
<dbReference type="GO" id="GO:0039502">
    <property type="term" value="P:symbiont-mediated suppression of host type I interferon-mediated signaling pathway"/>
    <property type="evidence" value="ECO:0007669"/>
    <property type="project" value="UniProtKB-KW"/>
</dbReference>
<dbReference type="Gene3D" id="4.10.80.340">
    <property type="match status" value="1"/>
</dbReference>
<dbReference type="InterPro" id="IPR024279">
    <property type="entry name" value="Paramyx_V_Zn-bd"/>
</dbReference>
<dbReference type="InterPro" id="IPR028243">
    <property type="entry name" value="Paramyxo_P/V_N"/>
</dbReference>
<dbReference type="Pfam" id="PF13825">
    <property type="entry name" value="Paramyxo_P_V_N"/>
    <property type="match status" value="1"/>
</dbReference>
<dbReference type="Pfam" id="PF13008">
    <property type="entry name" value="zf-Paramyx-P"/>
    <property type="match status" value="1"/>
</dbReference>
<protein>
    <recommendedName>
        <fullName>Non-structural protein V</fullName>
    </recommendedName>
</protein>
<sequence length="299" mass="32674">MAEEQAYHVNKGLECIKALRARPLDPLVVEEALAAWVETSEGQTLDRMSSDEAEADHQDISKPCFPAAGPGKSSMSRCHDQGLRGSNSCDEELGAFIGDSSMHSTEVQHYHVYDHSGEKVEGVEDADSILVQSGADDGVEVWGGDEESENSDVDSGEPDPEGSAPADWGSSPISPATRASDVETVEGDEIQKLLEDQSRIRKMTKAGKTLVVPPIPSQERPTASEKPIKKGHRREIDLIWNDGRVFIDRWCNPTCSKVTVGTVRAKCICGECPRVCEQCITDSGIENRIWYHNLADIPE</sequence>
<organismHost>
    <name type="scientific">Bos indicus</name>
    <name type="common">Zebu</name>
    <dbReference type="NCBI Taxonomy" id="9915"/>
</organismHost>
<organismHost>
    <name type="scientific">Bos taurus</name>
    <name type="common">Bovine</name>
    <dbReference type="NCBI Taxonomy" id="9913"/>
</organismHost>
<organismHost>
    <name type="scientific">Bubalus bubalis</name>
    <name type="common">Domestic water buffalo</name>
    <dbReference type="NCBI Taxonomy" id="89462"/>
</organismHost>
<organismHost>
    <name type="scientific">Capra hircus</name>
    <name type="common">Goat</name>
    <dbReference type="NCBI Taxonomy" id="9925"/>
</organismHost>
<organismHost>
    <name type="scientific">Gazella</name>
    <name type="common">gazelles</name>
    <dbReference type="NCBI Taxonomy" id="9933"/>
</organismHost>
<organismHost>
    <name type="scientific">Giraffa camelopardalis</name>
    <name type="common">Giraffe</name>
    <dbReference type="NCBI Taxonomy" id="9894"/>
</organismHost>
<organismHost>
    <name type="scientific">Hippopotamus</name>
    <dbReference type="NCBI Taxonomy" id="9832"/>
</organismHost>
<organismHost>
    <name type="scientific">Ovis aries</name>
    <name type="common">Sheep</name>
    <dbReference type="NCBI Taxonomy" id="9940"/>
</organismHost>
<organismHost>
    <name type="scientific">Suidae</name>
    <name type="common">pigs</name>
    <dbReference type="NCBI Taxonomy" id="9821"/>
</organismHost>
<accession>Q03340</accession>
<organism>
    <name type="scientific">Rinderpest virus (strain RBOK)</name>
    <name type="common">RDV</name>
    <dbReference type="NCBI Taxonomy" id="36409"/>
    <lineage>
        <taxon>Viruses</taxon>
        <taxon>Riboviria</taxon>
        <taxon>Orthornavirae</taxon>
        <taxon>Negarnaviricota</taxon>
        <taxon>Haploviricotina</taxon>
        <taxon>Monjiviricetes</taxon>
        <taxon>Mononegavirales</taxon>
        <taxon>Paramyxoviridae</taxon>
        <taxon>Orthoparamyxovirinae</taxon>
        <taxon>Morbillivirus</taxon>
        <taxon>Morbillivirus pecoris</taxon>
        <taxon>Rinderpest morbillivirus</taxon>
    </lineage>
</organism>
<gene>
    <name type="primary">P/V</name>
</gene>
<name>V_RINDR</name>
<feature type="chain" id="PRO_0000142824" description="Non-structural protein V">
    <location>
        <begin position="1"/>
        <end position="299"/>
    </location>
</feature>
<feature type="region of interest" description="Disordered" evidence="2">
    <location>
        <begin position="56"/>
        <end position="79"/>
    </location>
</feature>
<feature type="region of interest" description="Disordered" evidence="2">
    <location>
        <begin position="137"/>
        <end position="186"/>
    </location>
</feature>
<feature type="region of interest" description="Disordered" evidence="2">
    <location>
        <begin position="205"/>
        <end position="229"/>
    </location>
</feature>
<feature type="compositionally biased region" description="Acidic residues" evidence="2">
    <location>
        <begin position="137"/>
        <end position="160"/>
    </location>
</feature>
<feature type="binding site" evidence="1">
    <location>
        <position position="232"/>
    </location>
    <ligand>
        <name>Zn(2+)</name>
        <dbReference type="ChEBI" id="CHEBI:29105"/>
        <label>1</label>
    </ligand>
</feature>
<feature type="binding site" evidence="1">
    <location>
        <position position="251"/>
    </location>
    <ligand>
        <name>Zn(2+)</name>
        <dbReference type="ChEBI" id="CHEBI:29105"/>
        <label>1</label>
    </ligand>
</feature>
<feature type="binding site" evidence="1">
    <location>
        <position position="255"/>
    </location>
    <ligand>
        <name>Zn(2+)</name>
        <dbReference type="ChEBI" id="CHEBI:29105"/>
        <label>2</label>
    </ligand>
</feature>
<feature type="binding site" evidence="1">
    <location>
        <position position="267"/>
    </location>
    <ligand>
        <name>Zn(2+)</name>
        <dbReference type="ChEBI" id="CHEBI:29105"/>
        <label>2</label>
    </ligand>
</feature>
<feature type="binding site" evidence="1">
    <location>
        <position position="269"/>
    </location>
    <ligand>
        <name>Zn(2+)</name>
        <dbReference type="ChEBI" id="CHEBI:29105"/>
        <label>2</label>
    </ligand>
</feature>
<feature type="binding site" evidence="1">
    <location>
        <position position="272"/>
    </location>
    <ligand>
        <name>Zn(2+)</name>
        <dbReference type="ChEBI" id="CHEBI:29105"/>
        <label>2</label>
    </ligand>
</feature>
<feature type="binding site" evidence="1">
    <location>
        <position position="276"/>
    </location>
    <ligand>
        <name>Zn(2+)</name>
        <dbReference type="ChEBI" id="CHEBI:29105"/>
        <label>1</label>
    </ligand>
</feature>
<feature type="binding site" evidence="1">
    <location>
        <position position="279"/>
    </location>
    <ligand>
        <name>Zn(2+)</name>
        <dbReference type="ChEBI" id="CHEBI:29105"/>
        <label>1</label>
    </ligand>
</feature>
<proteinExistence type="inferred from homology"/>